<protein>
    <recommendedName>
        <fullName evidence="1">Small ribosomal subunit protein bS6</fullName>
    </recommendedName>
    <alternativeName>
        <fullName evidence="3">30S ribosomal protein S6</fullName>
    </alternativeName>
</protein>
<feature type="chain" id="PRO_0000176767" description="Small ribosomal subunit protein bS6">
    <location>
        <begin position="1"/>
        <end position="130"/>
    </location>
</feature>
<feature type="region of interest" description="Disordered" evidence="2">
    <location>
        <begin position="100"/>
        <end position="130"/>
    </location>
</feature>
<feature type="compositionally biased region" description="Basic and acidic residues" evidence="2">
    <location>
        <begin position="104"/>
        <end position="116"/>
    </location>
</feature>
<feature type="compositionally biased region" description="Acidic residues" evidence="2">
    <location>
        <begin position="117"/>
        <end position="130"/>
    </location>
</feature>
<dbReference type="EMBL" id="BX950851">
    <property type="protein sequence ID" value="CAG76511.1"/>
    <property type="molecule type" value="Genomic_DNA"/>
</dbReference>
<dbReference type="RefSeq" id="WP_011095115.1">
    <property type="nucleotide sequence ID" value="NC_004547.2"/>
</dbReference>
<dbReference type="SMR" id="Q6D135"/>
<dbReference type="STRING" id="218491.ECA3613"/>
<dbReference type="GeneID" id="57210286"/>
<dbReference type="KEGG" id="eca:ECA3613"/>
<dbReference type="PATRIC" id="fig|218491.5.peg.3666"/>
<dbReference type="eggNOG" id="COG0360">
    <property type="taxonomic scope" value="Bacteria"/>
</dbReference>
<dbReference type="HOGENOM" id="CLU_113441_6_1_6"/>
<dbReference type="OrthoDB" id="9812702at2"/>
<dbReference type="Proteomes" id="UP000007966">
    <property type="component" value="Chromosome"/>
</dbReference>
<dbReference type="GO" id="GO:0022627">
    <property type="term" value="C:cytosolic small ribosomal subunit"/>
    <property type="evidence" value="ECO:0007669"/>
    <property type="project" value="TreeGrafter"/>
</dbReference>
<dbReference type="GO" id="GO:0070181">
    <property type="term" value="F:small ribosomal subunit rRNA binding"/>
    <property type="evidence" value="ECO:0007669"/>
    <property type="project" value="TreeGrafter"/>
</dbReference>
<dbReference type="GO" id="GO:0003735">
    <property type="term" value="F:structural constituent of ribosome"/>
    <property type="evidence" value="ECO:0007669"/>
    <property type="project" value="InterPro"/>
</dbReference>
<dbReference type="GO" id="GO:0006412">
    <property type="term" value="P:translation"/>
    <property type="evidence" value="ECO:0007669"/>
    <property type="project" value="UniProtKB-UniRule"/>
</dbReference>
<dbReference type="CDD" id="cd00473">
    <property type="entry name" value="bS6"/>
    <property type="match status" value="1"/>
</dbReference>
<dbReference type="FunFam" id="3.30.70.60:FF:000003">
    <property type="entry name" value="30S ribosomal protein S6"/>
    <property type="match status" value="1"/>
</dbReference>
<dbReference type="Gene3D" id="3.30.70.60">
    <property type="match status" value="1"/>
</dbReference>
<dbReference type="HAMAP" id="MF_00360">
    <property type="entry name" value="Ribosomal_bS6"/>
    <property type="match status" value="1"/>
</dbReference>
<dbReference type="InterPro" id="IPR000529">
    <property type="entry name" value="Ribosomal_bS6"/>
</dbReference>
<dbReference type="InterPro" id="IPR020815">
    <property type="entry name" value="Ribosomal_bS6_CS"/>
</dbReference>
<dbReference type="InterPro" id="IPR035980">
    <property type="entry name" value="Ribosomal_bS6_sf"/>
</dbReference>
<dbReference type="InterPro" id="IPR020814">
    <property type="entry name" value="Ribosomal_S6_plastid/chlpt"/>
</dbReference>
<dbReference type="InterPro" id="IPR014717">
    <property type="entry name" value="Transl_elong_EF1B/ribsomal_bS6"/>
</dbReference>
<dbReference type="NCBIfam" id="TIGR00166">
    <property type="entry name" value="S6"/>
    <property type="match status" value="1"/>
</dbReference>
<dbReference type="PANTHER" id="PTHR21011">
    <property type="entry name" value="MITOCHONDRIAL 28S RIBOSOMAL PROTEIN S6"/>
    <property type="match status" value="1"/>
</dbReference>
<dbReference type="PANTHER" id="PTHR21011:SF1">
    <property type="entry name" value="SMALL RIBOSOMAL SUBUNIT PROTEIN BS6M"/>
    <property type="match status" value="1"/>
</dbReference>
<dbReference type="Pfam" id="PF01250">
    <property type="entry name" value="Ribosomal_S6"/>
    <property type="match status" value="1"/>
</dbReference>
<dbReference type="SUPFAM" id="SSF54995">
    <property type="entry name" value="Ribosomal protein S6"/>
    <property type="match status" value="1"/>
</dbReference>
<dbReference type="PROSITE" id="PS01048">
    <property type="entry name" value="RIBOSOMAL_S6"/>
    <property type="match status" value="1"/>
</dbReference>
<keyword id="KW-1185">Reference proteome</keyword>
<keyword id="KW-0687">Ribonucleoprotein</keyword>
<keyword id="KW-0689">Ribosomal protein</keyword>
<keyword id="KW-0694">RNA-binding</keyword>
<keyword id="KW-0699">rRNA-binding</keyword>
<organism>
    <name type="scientific">Pectobacterium atrosepticum (strain SCRI 1043 / ATCC BAA-672)</name>
    <name type="common">Erwinia carotovora subsp. atroseptica</name>
    <dbReference type="NCBI Taxonomy" id="218491"/>
    <lineage>
        <taxon>Bacteria</taxon>
        <taxon>Pseudomonadati</taxon>
        <taxon>Pseudomonadota</taxon>
        <taxon>Gammaproteobacteria</taxon>
        <taxon>Enterobacterales</taxon>
        <taxon>Pectobacteriaceae</taxon>
        <taxon>Pectobacterium</taxon>
    </lineage>
</organism>
<comment type="function">
    <text evidence="1">Binds together with bS18 to 16S ribosomal RNA.</text>
</comment>
<comment type="similarity">
    <text evidence="1">Belongs to the bacterial ribosomal protein bS6 family.</text>
</comment>
<proteinExistence type="inferred from homology"/>
<name>RS6_PECAS</name>
<gene>
    <name evidence="1" type="primary">rpsF</name>
    <name type="ordered locus">ECA3613</name>
</gene>
<accession>Q6D135</accession>
<evidence type="ECO:0000255" key="1">
    <source>
        <dbReference type="HAMAP-Rule" id="MF_00360"/>
    </source>
</evidence>
<evidence type="ECO:0000256" key="2">
    <source>
        <dbReference type="SAM" id="MobiDB-lite"/>
    </source>
</evidence>
<evidence type="ECO:0000305" key="3"/>
<sequence length="130" mass="15038">MRHYEIVFMVHPDQSEQVPGMIERYTATITGAQGTIHRLEDWGRRQLAYPINKLHKAHYVLLNVEAPQEAIDELETNFRFNDAVIRSMVMRVKHAVTEASPMVKAKDERRERREDFAEAGDDVEAGDSEE</sequence>
<reference key="1">
    <citation type="journal article" date="2004" name="Proc. Natl. Acad. Sci. U.S.A.">
        <title>Genome sequence of the enterobacterial phytopathogen Erwinia carotovora subsp. atroseptica and characterization of virulence factors.</title>
        <authorList>
            <person name="Bell K.S."/>
            <person name="Sebaihia M."/>
            <person name="Pritchard L."/>
            <person name="Holden M.T.G."/>
            <person name="Hyman L.J."/>
            <person name="Holeva M.C."/>
            <person name="Thomson N.R."/>
            <person name="Bentley S.D."/>
            <person name="Churcher L.J.C."/>
            <person name="Mungall K."/>
            <person name="Atkin R."/>
            <person name="Bason N."/>
            <person name="Brooks K."/>
            <person name="Chillingworth T."/>
            <person name="Clark K."/>
            <person name="Doggett J."/>
            <person name="Fraser A."/>
            <person name="Hance Z."/>
            <person name="Hauser H."/>
            <person name="Jagels K."/>
            <person name="Moule S."/>
            <person name="Norbertczak H."/>
            <person name="Ormond D."/>
            <person name="Price C."/>
            <person name="Quail M.A."/>
            <person name="Sanders M."/>
            <person name="Walker D."/>
            <person name="Whitehead S."/>
            <person name="Salmond G.P.C."/>
            <person name="Birch P.R.J."/>
            <person name="Parkhill J."/>
            <person name="Toth I.K."/>
        </authorList>
    </citation>
    <scope>NUCLEOTIDE SEQUENCE [LARGE SCALE GENOMIC DNA]</scope>
    <source>
        <strain>SCRI 1043 / ATCC BAA-672</strain>
    </source>
</reference>